<comment type="function">
    <text evidence="2">required for efficient sporulation.</text>
</comment>
<comment type="subcellular location">
    <subcellularLocation>
        <location evidence="3">Cell membrane</location>
        <topology evidence="3">Single-pass membrane protein</topology>
    </subcellularLocation>
</comment>
<comment type="induction">
    <text evidence="2">Expression is controlled by a sigma-E-regulated promoter which needs the sigma-E factor for the binding of the RNA polymerase and subsequent transcription.</text>
</comment>
<comment type="sequence caution" evidence="3">
    <conflict type="erroneous initiation">
        <sequence resource="EMBL-CDS" id="BAA19300"/>
    </conflict>
</comment>
<name>YDCC_BACSU</name>
<evidence type="ECO:0000255" key="1"/>
<evidence type="ECO:0000269" key="2">
    <source>
    </source>
</evidence>
<evidence type="ECO:0000305" key="3"/>
<proteinExistence type="evidence at transcript level"/>
<protein>
    <recommendedName>
        <fullName>Sporulation protein YdcC</fullName>
    </recommendedName>
</protein>
<sequence>MKKVRKSFVLLLTGLLAVLILSACGQKTQQDIVAGLDEKAKEYTSYKAKAKMTIETGSEPQVYNVEIWHKKPSLYRVYLENPKKDQNQVILRNENGVFVLTPSLNKSFRFQSDWPNNSSQVYLFESLVKDVQNDSDAVFTAKEKKYVFETKTNYQHNKMLPTQEITFNKKDMSPSSVKVMDTDRKVMVKVEFSSFEFNKQFDKESFDEKKNMTLSQMDVATSAKPSDTFAVKTPLELPLGVKLLEEKDISTEDGKRIIMTYGGEKSFTLIQEKAQIAKASSSVTLNGEPVNLGYTIGALSDASLSWTYDGVDYLLSSKDLSKEEMVTVAKSMQGQSSK</sequence>
<feature type="chain" id="PRO_0000360433" description="Sporulation protein YdcC">
    <location>
        <begin position="1"/>
        <end position="338"/>
    </location>
</feature>
<feature type="transmembrane region" description="Helical" evidence="1">
    <location>
        <begin position="8"/>
        <end position="25"/>
    </location>
</feature>
<accession>P96619</accession>
<accession>Q797K6</accession>
<organism>
    <name type="scientific">Bacillus subtilis (strain 168)</name>
    <dbReference type="NCBI Taxonomy" id="224308"/>
    <lineage>
        <taxon>Bacteria</taxon>
        <taxon>Bacillati</taxon>
        <taxon>Bacillota</taxon>
        <taxon>Bacilli</taxon>
        <taxon>Bacillales</taxon>
        <taxon>Bacillaceae</taxon>
        <taxon>Bacillus</taxon>
    </lineage>
</organism>
<keyword id="KW-1003">Cell membrane</keyword>
<keyword id="KW-0472">Membrane</keyword>
<keyword id="KW-1185">Reference proteome</keyword>
<keyword id="KW-0749">Sporulation</keyword>
<keyword id="KW-0812">Transmembrane</keyword>
<keyword id="KW-1133">Transmembrane helix</keyword>
<reference key="1">
    <citation type="submission" date="1997-03" db="EMBL/GenBank/DDBJ databases">
        <title>A 148 kbp sequence of the region between 35 and 47 degree of the Bacillus subtilis genome.</title>
        <authorList>
            <person name="Kasahara Y."/>
            <person name="Nakai S."/>
            <person name="Lee S."/>
            <person name="Sadaie Y."/>
            <person name="Ogasawara N."/>
        </authorList>
    </citation>
    <scope>NUCLEOTIDE SEQUENCE [GENOMIC DNA]</scope>
    <source>
        <strain>168</strain>
    </source>
</reference>
<reference key="2">
    <citation type="journal article" date="1997" name="Nature">
        <title>The complete genome sequence of the Gram-positive bacterium Bacillus subtilis.</title>
        <authorList>
            <person name="Kunst F."/>
            <person name="Ogasawara N."/>
            <person name="Moszer I."/>
            <person name="Albertini A.M."/>
            <person name="Alloni G."/>
            <person name="Azevedo V."/>
            <person name="Bertero M.G."/>
            <person name="Bessieres P."/>
            <person name="Bolotin A."/>
            <person name="Borchert S."/>
            <person name="Borriss R."/>
            <person name="Boursier L."/>
            <person name="Brans A."/>
            <person name="Braun M."/>
            <person name="Brignell S.C."/>
            <person name="Bron S."/>
            <person name="Brouillet S."/>
            <person name="Bruschi C.V."/>
            <person name="Caldwell B."/>
            <person name="Capuano V."/>
            <person name="Carter N.M."/>
            <person name="Choi S.-K."/>
            <person name="Codani J.-J."/>
            <person name="Connerton I.F."/>
            <person name="Cummings N.J."/>
            <person name="Daniel R.A."/>
            <person name="Denizot F."/>
            <person name="Devine K.M."/>
            <person name="Duesterhoeft A."/>
            <person name="Ehrlich S.D."/>
            <person name="Emmerson P.T."/>
            <person name="Entian K.-D."/>
            <person name="Errington J."/>
            <person name="Fabret C."/>
            <person name="Ferrari E."/>
            <person name="Foulger D."/>
            <person name="Fritz C."/>
            <person name="Fujita M."/>
            <person name="Fujita Y."/>
            <person name="Fuma S."/>
            <person name="Galizzi A."/>
            <person name="Galleron N."/>
            <person name="Ghim S.-Y."/>
            <person name="Glaser P."/>
            <person name="Goffeau A."/>
            <person name="Golightly E.J."/>
            <person name="Grandi G."/>
            <person name="Guiseppi G."/>
            <person name="Guy B.J."/>
            <person name="Haga K."/>
            <person name="Haiech J."/>
            <person name="Harwood C.R."/>
            <person name="Henaut A."/>
            <person name="Hilbert H."/>
            <person name="Holsappel S."/>
            <person name="Hosono S."/>
            <person name="Hullo M.-F."/>
            <person name="Itaya M."/>
            <person name="Jones L.-M."/>
            <person name="Joris B."/>
            <person name="Karamata D."/>
            <person name="Kasahara Y."/>
            <person name="Klaerr-Blanchard M."/>
            <person name="Klein C."/>
            <person name="Kobayashi Y."/>
            <person name="Koetter P."/>
            <person name="Koningstein G."/>
            <person name="Krogh S."/>
            <person name="Kumano M."/>
            <person name="Kurita K."/>
            <person name="Lapidus A."/>
            <person name="Lardinois S."/>
            <person name="Lauber J."/>
            <person name="Lazarevic V."/>
            <person name="Lee S.-M."/>
            <person name="Levine A."/>
            <person name="Liu H."/>
            <person name="Masuda S."/>
            <person name="Mauel C."/>
            <person name="Medigue C."/>
            <person name="Medina N."/>
            <person name="Mellado R.P."/>
            <person name="Mizuno M."/>
            <person name="Moestl D."/>
            <person name="Nakai S."/>
            <person name="Noback M."/>
            <person name="Noone D."/>
            <person name="O'Reilly M."/>
            <person name="Ogawa K."/>
            <person name="Ogiwara A."/>
            <person name="Oudega B."/>
            <person name="Park S.-H."/>
            <person name="Parro V."/>
            <person name="Pohl T.M."/>
            <person name="Portetelle D."/>
            <person name="Porwollik S."/>
            <person name="Prescott A.M."/>
            <person name="Presecan E."/>
            <person name="Pujic P."/>
            <person name="Purnelle B."/>
            <person name="Rapoport G."/>
            <person name="Rey M."/>
            <person name="Reynolds S."/>
            <person name="Rieger M."/>
            <person name="Rivolta C."/>
            <person name="Rocha E."/>
            <person name="Roche B."/>
            <person name="Rose M."/>
            <person name="Sadaie Y."/>
            <person name="Sato T."/>
            <person name="Scanlan E."/>
            <person name="Schleich S."/>
            <person name="Schroeter R."/>
            <person name="Scoffone F."/>
            <person name="Sekiguchi J."/>
            <person name="Sekowska A."/>
            <person name="Seror S.J."/>
            <person name="Serror P."/>
            <person name="Shin B.-S."/>
            <person name="Soldo B."/>
            <person name="Sorokin A."/>
            <person name="Tacconi E."/>
            <person name="Takagi T."/>
            <person name="Takahashi H."/>
            <person name="Takemaru K."/>
            <person name="Takeuchi M."/>
            <person name="Tamakoshi A."/>
            <person name="Tanaka T."/>
            <person name="Terpstra P."/>
            <person name="Tognoni A."/>
            <person name="Tosato V."/>
            <person name="Uchiyama S."/>
            <person name="Vandenbol M."/>
            <person name="Vannier F."/>
            <person name="Vassarotti A."/>
            <person name="Viari A."/>
            <person name="Wambutt R."/>
            <person name="Wedler E."/>
            <person name="Wedler H."/>
            <person name="Weitzenegger T."/>
            <person name="Winters P."/>
            <person name="Wipat A."/>
            <person name="Yamamoto H."/>
            <person name="Yamane K."/>
            <person name="Yasumoto K."/>
            <person name="Yata K."/>
            <person name="Yoshida K."/>
            <person name="Yoshikawa H.-F."/>
            <person name="Zumstein E."/>
            <person name="Yoshikawa H."/>
            <person name="Danchin A."/>
        </authorList>
    </citation>
    <scope>NUCLEOTIDE SEQUENCE [LARGE SCALE GENOMIC DNA]</scope>
    <source>
        <strain>168</strain>
    </source>
</reference>
<reference key="3">
    <citation type="journal article" date="2003" name="Microbiology">
        <title>Identification of sporulation genes by genome-wide analysis of the sigmaE regulon of Bacillus subtilis.</title>
        <authorList>
            <person name="Feucht A."/>
            <person name="Evans L."/>
            <person name="Errington J."/>
        </authorList>
    </citation>
    <scope>INDUCTION</scope>
    <scope>FUNCTION</scope>
</reference>
<gene>
    <name type="primary">ydcC</name>
    <name type="ordered locus">BSU04630</name>
</gene>
<dbReference type="EMBL" id="AB001488">
    <property type="protein sequence ID" value="BAA19300.1"/>
    <property type="status" value="ALT_INIT"/>
    <property type="molecule type" value="Genomic_DNA"/>
</dbReference>
<dbReference type="EMBL" id="AL009126">
    <property type="protein sequence ID" value="CAB12270.2"/>
    <property type="molecule type" value="Genomic_DNA"/>
</dbReference>
<dbReference type="PIR" id="A69773">
    <property type="entry name" value="A69773"/>
</dbReference>
<dbReference type="RefSeq" id="NP_388344.2">
    <property type="nucleotide sequence ID" value="NC_000964.3"/>
</dbReference>
<dbReference type="RefSeq" id="WP_003234282.1">
    <property type="nucleotide sequence ID" value="NZ_OZ025638.1"/>
</dbReference>
<dbReference type="SMR" id="P96619"/>
<dbReference type="FunCoup" id="P96619">
    <property type="interactions" value="71"/>
</dbReference>
<dbReference type="STRING" id="224308.BSU04630"/>
<dbReference type="PaxDb" id="224308-BSU04630"/>
<dbReference type="DNASU" id="938166"/>
<dbReference type="EnsemblBacteria" id="CAB12270">
    <property type="protein sequence ID" value="CAB12270"/>
    <property type="gene ID" value="BSU_04630"/>
</dbReference>
<dbReference type="GeneID" id="938166"/>
<dbReference type="KEGG" id="bsu:BSU04630"/>
<dbReference type="PATRIC" id="fig|224308.43.peg.483"/>
<dbReference type="eggNOG" id="COG2834">
    <property type="taxonomic scope" value="Bacteria"/>
</dbReference>
<dbReference type="InParanoid" id="P96619"/>
<dbReference type="OrthoDB" id="9785380at2"/>
<dbReference type="BioCyc" id="BSUB:BSU04630-MONOMER"/>
<dbReference type="Proteomes" id="UP000001570">
    <property type="component" value="Chromosome"/>
</dbReference>
<dbReference type="GO" id="GO:0005886">
    <property type="term" value="C:plasma membrane"/>
    <property type="evidence" value="ECO:0007669"/>
    <property type="project" value="UniProtKB-SubCell"/>
</dbReference>
<dbReference type="GO" id="GO:0030435">
    <property type="term" value="P:sporulation resulting in formation of a cellular spore"/>
    <property type="evidence" value="ECO:0007669"/>
    <property type="project" value="UniProtKB-KW"/>
</dbReference>
<dbReference type="Gene3D" id="2.50.20.10">
    <property type="entry name" value="Lipoprotein localisation LolA/LolB/LppX"/>
    <property type="match status" value="1"/>
</dbReference>
<dbReference type="InterPro" id="IPR029046">
    <property type="entry name" value="LolA/LolB/LppX"/>
</dbReference>
<dbReference type="InterPro" id="IPR052944">
    <property type="entry name" value="Sporulation_related"/>
</dbReference>
<dbReference type="PANTHER" id="PTHR37507">
    <property type="entry name" value="SPORULATION PROTEIN YDCC"/>
    <property type="match status" value="1"/>
</dbReference>
<dbReference type="PANTHER" id="PTHR37507:SF2">
    <property type="entry name" value="SPORULATION PROTEIN YDCC"/>
    <property type="match status" value="1"/>
</dbReference>
<dbReference type="SUPFAM" id="SSF89392">
    <property type="entry name" value="Prokaryotic lipoproteins and lipoprotein localization factors"/>
    <property type="match status" value="1"/>
</dbReference>